<accession>Q9FIJ4</accession>
<accession>Q8LAJ6</accession>
<protein>
    <recommendedName>
        <fullName evidence="5">DNA repair RAD52-like protein 2, chloroplastic</fullName>
    </recommendedName>
    <alternativeName>
        <fullName evidence="4">Organellar DNA-binding protein 2</fullName>
    </alternativeName>
</protein>
<dbReference type="EMBL" id="AB016886">
    <property type="protein sequence ID" value="BAB11334.1"/>
    <property type="molecule type" value="Genomic_DNA"/>
</dbReference>
<dbReference type="EMBL" id="CP002688">
    <property type="protein sequence ID" value="AED95582.1"/>
    <property type="molecule type" value="Genomic_DNA"/>
</dbReference>
<dbReference type="EMBL" id="AK175664">
    <property type="protein sequence ID" value="BAD43427.1"/>
    <property type="molecule type" value="mRNA"/>
</dbReference>
<dbReference type="EMBL" id="BT024916">
    <property type="protein sequence ID" value="ABD94072.1"/>
    <property type="molecule type" value="mRNA"/>
</dbReference>
<dbReference type="EMBL" id="AY087773">
    <property type="protein sequence ID" value="AAM65309.1"/>
    <property type="molecule type" value="mRNA"/>
</dbReference>
<dbReference type="RefSeq" id="NP_199598.1">
    <property type="nucleotide sequence ID" value="NM_124161.3"/>
</dbReference>
<dbReference type="SMR" id="Q9FIJ4"/>
<dbReference type="FunCoup" id="Q9FIJ4">
    <property type="interactions" value="1444"/>
</dbReference>
<dbReference type="STRING" id="3702.Q9FIJ4"/>
<dbReference type="iPTMnet" id="Q9FIJ4"/>
<dbReference type="PaxDb" id="3702-AT5G47870.1"/>
<dbReference type="ProteomicsDB" id="225922"/>
<dbReference type="EnsemblPlants" id="AT5G47870.1">
    <property type="protein sequence ID" value="AT5G47870.1"/>
    <property type="gene ID" value="AT5G47870"/>
</dbReference>
<dbReference type="GeneID" id="834838"/>
<dbReference type="Gramene" id="AT5G47870.1">
    <property type="protein sequence ID" value="AT5G47870.1"/>
    <property type="gene ID" value="AT5G47870"/>
</dbReference>
<dbReference type="KEGG" id="ath:AT5G47870"/>
<dbReference type="Araport" id="AT5G47870"/>
<dbReference type="TAIR" id="AT5G47870">
    <property type="gene designation" value="RAD52-2"/>
</dbReference>
<dbReference type="eggNOG" id="ENOG502RXVC">
    <property type="taxonomic scope" value="Eukaryota"/>
</dbReference>
<dbReference type="HOGENOM" id="CLU_095139_0_1_1"/>
<dbReference type="InParanoid" id="Q9FIJ4"/>
<dbReference type="OMA" id="CMITCKS"/>
<dbReference type="PhylomeDB" id="Q9FIJ4"/>
<dbReference type="PRO" id="PR:Q9FIJ4"/>
<dbReference type="Proteomes" id="UP000006548">
    <property type="component" value="Chromosome 5"/>
</dbReference>
<dbReference type="ExpressionAtlas" id="Q9FIJ4">
    <property type="expression patterns" value="baseline and differential"/>
</dbReference>
<dbReference type="GO" id="GO:0009507">
    <property type="term" value="C:chloroplast"/>
    <property type="evidence" value="ECO:0000314"/>
    <property type="project" value="TAIR"/>
</dbReference>
<dbReference type="GO" id="GO:0009536">
    <property type="term" value="C:plastid"/>
    <property type="evidence" value="ECO:0007005"/>
    <property type="project" value="TAIR"/>
</dbReference>
<dbReference type="GO" id="GO:0003677">
    <property type="term" value="F:DNA binding"/>
    <property type="evidence" value="ECO:0007669"/>
    <property type="project" value="UniProtKB-KW"/>
</dbReference>
<dbReference type="GO" id="GO:0000724">
    <property type="term" value="P:double-strand break repair via homologous recombination"/>
    <property type="evidence" value="ECO:0000315"/>
    <property type="project" value="TAIR"/>
</dbReference>
<dbReference type="InterPro" id="IPR037489">
    <property type="entry name" value="RAD52-like"/>
</dbReference>
<dbReference type="PANTHER" id="PTHR34050">
    <property type="entry name" value="DNA REPAIR RAD52-LIKE PROTEIN 2, CHLOROPLASTIC"/>
    <property type="match status" value="1"/>
</dbReference>
<dbReference type="PANTHER" id="PTHR34050:SF3">
    <property type="entry name" value="DNA REPAIR RAD52-LIKE PROTEIN 2, CHLOROPLASTIC"/>
    <property type="match status" value="1"/>
</dbReference>
<proteinExistence type="evidence at protein level"/>
<sequence length="199" mass="21409">MALQVQQTSAAFTISSPSTAAARIKLSPFRTVAVNRGVRCSGGGVGGGDAGKKKAVPNSNYVVPIDKFSSSSSITRPLIEILRDLNKKIPDNIVKSHDPPSTSAATSGFIPWYHANRMLSFYAPGWCGEVRDVIFSENGNVTVVYRLTIRGSDGEAHRESTGTVTTTDDHIEDPVTAAEEIAFCRACARFGLGLYLYHE</sequence>
<reference key="1">
    <citation type="journal article" date="1998" name="DNA Res.">
        <title>Structural analysis of Arabidopsis thaliana chromosome 5. VIII. Sequence features of the regions of 1,081,958 bp covered by seventeen physically assigned P1 and TAC clones.</title>
        <authorList>
            <person name="Asamizu E."/>
            <person name="Sato S."/>
            <person name="Kaneko T."/>
            <person name="Nakamura Y."/>
            <person name="Kotani H."/>
            <person name="Miyajima N."/>
            <person name="Tabata S."/>
        </authorList>
    </citation>
    <scope>NUCLEOTIDE SEQUENCE [LARGE SCALE GENOMIC DNA]</scope>
    <source>
        <strain>cv. Columbia</strain>
    </source>
</reference>
<reference key="2">
    <citation type="journal article" date="2017" name="Plant J.">
        <title>Araport11: a complete reannotation of the Arabidopsis thaliana reference genome.</title>
        <authorList>
            <person name="Cheng C.Y."/>
            <person name="Krishnakumar V."/>
            <person name="Chan A.P."/>
            <person name="Thibaud-Nissen F."/>
            <person name="Schobel S."/>
            <person name="Town C.D."/>
        </authorList>
    </citation>
    <scope>GENOME REANNOTATION</scope>
    <source>
        <strain>cv. Columbia</strain>
    </source>
</reference>
<reference key="3">
    <citation type="submission" date="2004-09" db="EMBL/GenBank/DDBJ databases">
        <title>Large-scale analysis of RIKEN Arabidopsis full-length (RAFL) cDNAs.</title>
        <authorList>
            <person name="Totoki Y."/>
            <person name="Seki M."/>
            <person name="Ishida J."/>
            <person name="Nakajima M."/>
            <person name="Enju A."/>
            <person name="Kamiya A."/>
            <person name="Narusaka M."/>
            <person name="Shin-i T."/>
            <person name="Nakagawa M."/>
            <person name="Sakamoto N."/>
            <person name="Oishi K."/>
            <person name="Kohara Y."/>
            <person name="Kobayashi M."/>
            <person name="Toyoda A."/>
            <person name="Sakaki Y."/>
            <person name="Sakurai T."/>
            <person name="Iida K."/>
            <person name="Akiyama K."/>
            <person name="Satou M."/>
            <person name="Toyoda T."/>
            <person name="Konagaya A."/>
            <person name="Carninci P."/>
            <person name="Kawai J."/>
            <person name="Hayashizaki Y."/>
            <person name="Shinozaki K."/>
        </authorList>
    </citation>
    <scope>NUCLEOTIDE SEQUENCE [LARGE SCALE MRNA]</scope>
    <source>
        <strain>cv. Columbia</strain>
    </source>
</reference>
<reference key="4">
    <citation type="submission" date="2006-03" db="EMBL/GenBank/DDBJ databases">
        <title>Arabidopsis ORF clones.</title>
        <authorList>
            <person name="Shinn P."/>
            <person name="Chen H."/>
            <person name="Kim C.J."/>
            <person name="Ecker J.R."/>
        </authorList>
    </citation>
    <scope>NUCLEOTIDE SEQUENCE [LARGE SCALE MRNA]</scope>
    <source>
        <strain>cv. Columbia</strain>
    </source>
</reference>
<reference key="5">
    <citation type="submission" date="2002-03" db="EMBL/GenBank/DDBJ databases">
        <title>Full-length cDNA from Arabidopsis thaliana.</title>
        <authorList>
            <person name="Brover V.V."/>
            <person name="Troukhan M.E."/>
            <person name="Alexandrov N.A."/>
            <person name="Lu Y.-P."/>
            <person name="Flavell R.B."/>
            <person name="Feldmann K.A."/>
        </authorList>
    </citation>
    <scope>NUCLEOTIDE SEQUENCE [LARGE SCALE MRNA]</scope>
</reference>
<reference key="6">
    <citation type="journal article" date="2011" name="Plant Cell">
        <title>Identification of plant RAD52 homologs and characterization of the Arabidopsis thaliana RAD52-like genes.</title>
        <authorList>
            <person name="Samach A."/>
            <person name="Melamed-Bessudo C."/>
            <person name="Avivi-Ragolski N."/>
            <person name="Pietrokovski S."/>
            <person name="Levy A.A."/>
        </authorList>
    </citation>
    <scope>FUNCTION</scope>
    <scope>SUBCELLULAR LOCATION</scope>
    <scope>TISSUE SPECIFICITY</scope>
    <scope>DISRUPTION PHENOTYPE</scope>
</reference>
<reference key="7">
    <citation type="journal article" date="2012" name="Mol. Cell. Proteomics">
        <title>Comparative large-scale characterisation of plant vs. mammal proteins reveals similar and idiosyncratic N-alpha acetylation features.</title>
        <authorList>
            <person name="Bienvenut W.V."/>
            <person name="Sumpton D."/>
            <person name="Martinez A."/>
            <person name="Lilla S."/>
            <person name="Espagne C."/>
            <person name="Meinnel T."/>
            <person name="Giglione C."/>
        </authorList>
    </citation>
    <scope>ACETYLATION [LARGE SCALE ANALYSIS] AT SER-41</scope>
    <scope>CLEAVAGE OF TRANSIT PEPTIDE [LARGE SCALE ANALYSIS] AFTER CYS-40</scope>
    <scope>IDENTIFICATION BY MASS SPECTROMETRY [LARGE SCALE ANALYSIS]</scope>
</reference>
<reference key="8">
    <citation type="journal article" date="2012" name="Plant J.">
        <title>A RAD52-like single-stranded DNA binding protein affects mitochondrial DNA repair by recombination.</title>
        <authorList>
            <person name="Janicka S."/>
            <person name="Kuehn K."/>
            <person name="Le Ret M."/>
            <person name="Bonnard G."/>
            <person name="Imbault P."/>
            <person name="Augustyniak H."/>
            <person name="Gualberto J.M."/>
        </authorList>
    </citation>
    <scope>SUBCELLULAR LOCATION</scope>
</reference>
<organism>
    <name type="scientific">Arabidopsis thaliana</name>
    <name type="common">Mouse-ear cress</name>
    <dbReference type="NCBI Taxonomy" id="3702"/>
    <lineage>
        <taxon>Eukaryota</taxon>
        <taxon>Viridiplantae</taxon>
        <taxon>Streptophyta</taxon>
        <taxon>Embryophyta</taxon>
        <taxon>Tracheophyta</taxon>
        <taxon>Spermatophyta</taxon>
        <taxon>Magnoliopsida</taxon>
        <taxon>eudicotyledons</taxon>
        <taxon>Gunneridae</taxon>
        <taxon>Pentapetalae</taxon>
        <taxon>rosids</taxon>
        <taxon>malvids</taxon>
        <taxon>Brassicales</taxon>
        <taxon>Brassicaceae</taxon>
        <taxon>Camelineae</taxon>
        <taxon>Arabidopsis</taxon>
    </lineage>
</organism>
<feature type="transit peptide" description="Chloroplast" evidence="8">
    <location>
        <begin position="1"/>
        <end position="40"/>
    </location>
</feature>
<feature type="chain" id="PRO_0000438187" description="DNA repair RAD52-like protein 2, chloroplastic">
    <location>
        <begin position="41"/>
        <end position="199"/>
    </location>
</feature>
<feature type="modified residue" description="N-acetylserine" evidence="8">
    <location>
        <position position="41"/>
    </location>
</feature>
<feature type="sequence conflict" description="In Ref. 5; AAM65309." evidence="5" ref="5">
    <original>V</original>
    <variation>M</variation>
    <location>
        <position position="5"/>
    </location>
</feature>
<feature type="sequence conflict" description="In Ref. 5; AAM65309." evidence="5" ref="5">
    <original>D</original>
    <variation>Y</variation>
    <location>
        <position position="169"/>
    </location>
</feature>
<comment type="function">
    <text evidence="1">Involved in double-stranded DNA break repair.</text>
</comment>
<comment type="subcellular location">
    <subcellularLocation>
        <location evidence="1 2">Plastid</location>
        <location evidence="1 2">Chloroplast</location>
    </subcellularLocation>
    <text evidence="1">Distributed in a punctate pattern within chloroplast.</text>
</comment>
<comment type="tissue specificity">
    <text evidence="1">Expressed in roots and shoots. Expressed at low levels in cauline leaves, flower buds, flowers and siliques.</text>
</comment>
<comment type="disruption phenotype">
    <text evidence="1">Reduced fertility, increased sensitivity to mitomycin C, and decreased levels of intrachromosomal recombination.</text>
</comment>
<comment type="similarity">
    <text evidence="5">Belongs to the RAD52 family.</text>
</comment>
<evidence type="ECO:0000269" key="1">
    <source>
    </source>
</evidence>
<evidence type="ECO:0000269" key="2">
    <source>
    </source>
</evidence>
<evidence type="ECO:0000303" key="3">
    <source>
    </source>
</evidence>
<evidence type="ECO:0000303" key="4">
    <source>
    </source>
</evidence>
<evidence type="ECO:0000305" key="5"/>
<evidence type="ECO:0000312" key="6">
    <source>
        <dbReference type="Araport" id="AT5G47870"/>
    </source>
</evidence>
<evidence type="ECO:0000312" key="7">
    <source>
        <dbReference type="EMBL" id="BAB11334.1"/>
    </source>
</evidence>
<evidence type="ECO:0007744" key="8">
    <source>
    </source>
</evidence>
<keyword id="KW-0007">Acetylation</keyword>
<keyword id="KW-0150">Chloroplast</keyword>
<keyword id="KW-0227">DNA damage</keyword>
<keyword id="KW-0233">DNA recombination</keyword>
<keyword id="KW-0234">DNA repair</keyword>
<keyword id="KW-0238">DNA-binding</keyword>
<keyword id="KW-0934">Plastid</keyword>
<keyword id="KW-1185">Reference proteome</keyword>
<keyword id="KW-0809">Transit peptide</keyword>
<gene>
    <name evidence="3" type="primary">RAD52-2</name>
    <name evidence="4" type="synonym">ODB2</name>
    <name evidence="6" type="ordered locus">At5g47870</name>
    <name evidence="7" type="ORF">MCA23.21</name>
</gene>
<name>RD522_ARATH</name>